<name>YHBB_BACSU</name>
<protein>
    <recommendedName>
        <fullName>Uncharacterized protein YhbB</fullName>
    </recommendedName>
</protein>
<organism>
    <name type="scientific">Bacillus subtilis (strain 168)</name>
    <dbReference type="NCBI Taxonomy" id="224308"/>
    <lineage>
        <taxon>Bacteria</taxon>
        <taxon>Bacillati</taxon>
        <taxon>Bacillota</taxon>
        <taxon>Bacilli</taxon>
        <taxon>Bacillales</taxon>
        <taxon>Bacillaceae</taxon>
        <taxon>Bacillus</taxon>
    </lineage>
</organism>
<proteinExistence type="predicted"/>
<reference key="1">
    <citation type="submission" date="1997-03" db="EMBL/GenBank/DDBJ databases">
        <authorList>
            <person name="Cummings N.J."/>
            <person name="Ruiz-Teran F."/>
            <person name="Connerton I.F."/>
        </authorList>
    </citation>
    <scope>NUCLEOTIDE SEQUENCE [GENOMIC DNA]</scope>
    <source>
        <strain>168</strain>
    </source>
</reference>
<reference key="2">
    <citation type="journal article" date="1997" name="Nature">
        <title>The complete genome sequence of the Gram-positive bacterium Bacillus subtilis.</title>
        <authorList>
            <person name="Kunst F."/>
            <person name="Ogasawara N."/>
            <person name="Moszer I."/>
            <person name="Albertini A.M."/>
            <person name="Alloni G."/>
            <person name="Azevedo V."/>
            <person name="Bertero M.G."/>
            <person name="Bessieres P."/>
            <person name="Bolotin A."/>
            <person name="Borchert S."/>
            <person name="Borriss R."/>
            <person name="Boursier L."/>
            <person name="Brans A."/>
            <person name="Braun M."/>
            <person name="Brignell S.C."/>
            <person name="Bron S."/>
            <person name="Brouillet S."/>
            <person name="Bruschi C.V."/>
            <person name="Caldwell B."/>
            <person name="Capuano V."/>
            <person name="Carter N.M."/>
            <person name="Choi S.-K."/>
            <person name="Codani J.-J."/>
            <person name="Connerton I.F."/>
            <person name="Cummings N.J."/>
            <person name="Daniel R.A."/>
            <person name="Denizot F."/>
            <person name="Devine K.M."/>
            <person name="Duesterhoeft A."/>
            <person name="Ehrlich S.D."/>
            <person name="Emmerson P.T."/>
            <person name="Entian K.-D."/>
            <person name="Errington J."/>
            <person name="Fabret C."/>
            <person name="Ferrari E."/>
            <person name="Foulger D."/>
            <person name="Fritz C."/>
            <person name="Fujita M."/>
            <person name="Fujita Y."/>
            <person name="Fuma S."/>
            <person name="Galizzi A."/>
            <person name="Galleron N."/>
            <person name="Ghim S.-Y."/>
            <person name="Glaser P."/>
            <person name="Goffeau A."/>
            <person name="Golightly E.J."/>
            <person name="Grandi G."/>
            <person name="Guiseppi G."/>
            <person name="Guy B.J."/>
            <person name="Haga K."/>
            <person name="Haiech J."/>
            <person name="Harwood C.R."/>
            <person name="Henaut A."/>
            <person name="Hilbert H."/>
            <person name="Holsappel S."/>
            <person name="Hosono S."/>
            <person name="Hullo M.-F."/>
            <person name="Itaya M."/>
            <person name="Jones L.-M."/>
            <person name="Joris B."/>
            <person name="Karamata D."/>
            <person name="Kasahara Y."/>
            <person name="Klaerr-Blanchard M."/>
            <person name="Klein C."/>
            <person name="Kobayashi Y."/>
            <person name="Koetter P."/>
            <person name="Koningstein G."/>
            <person name="Krogh S."/>
            <person name="Kumano M."/>
            <person name="Kurita K."/>
            <person name="Lapidus A."/>
            <person name="Lardinois S."/>
            <person name="Lauber J."/>
            <person name="Lazarevic V."/>
            <person name="Lee S.-M."/>
            <person name="Levine A."/>
            <person name="Liu H."/>
            <person name="Masuda S."/>
            <person name="Mauel C."/>
            <person name="Medigue C."/>
            <person name="Medina N."/>
            <person name="Mellado R.P."/>
            <person name="Mizuno M."/>
            <person name="Moestl D."/>
            <person name="Nakai S."/>
            <person name="Noback M."/>
            <person name="Noone D."/>
            <person name="O'Reilly M."/>
            <person name="Ogawa K."/>
            <person name="Ogiwara A."/>
            <person name="Oudega B."/>
            <person name="Park S.-H."/>
            <person name="Parro V."/>
            <person name="Pohl T.M."/>
            <person name="Portetelle D."/>
            <person name="Porwollik S."/>
            <person name="Prescott A.M."/>
            <person name="Presecan E."/>
            <person name="Pujic P."/>
            <person name="Purnelle B."/>
            <person name="Rapoport G."/>
            <person name="Rey M."/>
            <person name="Reynolds S."/>
            <person name="Rieger M."/>
            <person name="Rivolta C."/>
            <person name="Rocha E."/>
            <person name="Roche B."/>
            <person name="Rose M."/>
            <person name="Sadaie Y."/>
            <person name="Sato T."/>
            <person name="Scanlan E."/>
            <person name="Schleich S."/>
            <person name="Schroeter R."/>
            <person name="Scoffone F."/>
            <person name="Sekiguchi J."/>
            <person name="Sekowska A."/>
            <person name="Seror S.J."/>
            <person name="Serror P."/>
            <person name="Shin B.-S."/>
            <person name="Soldo B."/>
            <person name="Sorokin A."/>
            <person name="Tacconi E."/>
            <person name="Takagi T."/>
            <person name="Takahashi H."/>
            <person name="Takemaru K."/>
            <person name="Takeuchi M."/>
            <person name="Tamakoshi A."/>
            <person name="Tanaka T."/>
            <person name="Terpstra P."/>
            <person name="Tognoni A."/>
            <person name="Tosato V."/>
            <person name="Uchiyama S."/>
            <person name="Vandenbol M."/>
            <person name="Vannier F."/>
            <person name="Vassarotti A."/>
            <person name="Viari A."/>
            <person name="Wambutt R."/>
            <person name="Wedler E."/>
            <person name="Wedler H."/>
            <person name="Weitzenegger T."/>
            <person name="Winters P."/>
            <person name="Wipat A."/>
            <person name="Yamamoto H."/>
            <person name="Yamane K."/>
            <person name="Yasumoto K."/>
            <person name="Yata K."/>
            <person name="Yoshida K."/>
            <person name="Yoshikawa H.-F."/>
            <person name="Zumstein E."/>
            <person name="Yoshikawa H."/>
            <person name="Danchin A."/>
        </authorList>
    </citation>
    <scope>NUCLEOTIDE SEQUENCE [LARGE SCALE GENOMIC DNA]</scope>
    <source>
        <strain>168</strain>
    </source>
</reference>
<gene>
    <name type="primary">yhbB</name>
    <name type="synonym">ygaQ</name>
    <name type="ordered locus">BSU08920</name>
</gene>
<accession>O31589</accession>
<accession>P97031</accession>
<dbReference type="EMBL" id="Z93102">
    <property type="protein sequence ID" value="CAB07515.1"/>
    <property type="molecule type" value="Genomic_DNA"/>
</dbReference>
<dbReference type="EMBL" id="AL009126">
    <property type="protein sequence ID" value="CAB12720.1"/>
    <property type="molecule type" value="Genomic_DNA"/>
</dbReference>
<dbReference type="PIR" id="F69820">
    <property type="entry name" value="F69820"/>
</dbReference>
<dbReference type="RefSeq" id="NP_388773.1">
    <property type="nucleotide sequence ID" value="NC_000964.3"/>
</dbReference>
<dbReference type="RefSeq" id="WP_010886452.1">
    <property type="nucleotide sequence ID" value="NZ_OZ025638.1"/>
</dbReference>
<dbReference type="FunCoup" id="O31589">
    <property type="interactions" value="28"/>
</dbReference>
<dbReference type="STRING" id="224308.BSU08920"/>
<dbReference type="PaxDb" id="224308-BSU08920"/>
<dbReference type="EnsemblBacteria" id="CAB12720">
    <property type="protein sequence ID" value="CAB12720"/>
    <property type="gene ID" value="BSU_08920"/>
</dbReference>
<dbReference type="GeneID" id="936223"/>
<dbReference type="KEGG" id="bsu:BSU08920"/>
<dbReference type="PATRIC" id="fig|224308.43.peg.934"/>
<dbReference type="eggNOG" id="ENOG502Z7JI">
    <property type="taxonomic scope" value="Bacteria"/>
</dbReference>
<dbReference type="InParanoid" id="O31589"/>
<dbReference type="OrthoDB" id="9812429at2"/>
<dbReference type="BioCyc" id="BSUB:BSU08920-MONOMER"/>
<dbReference type="Proteomes" id="UP000001570">
    <property type="component" value="Chromosome"/>
</dbReference>
<dbReference type="InterPro" id="IPR024301">
    <property type="entry name" value="Amidase_6"/>
</dbReference>
<dbReference type="PANTHER" id="PTHR40032:SF1">
    <property type="entry name" value="EXPORTED PROTEIN"/>
    <property type="match status" value="1"/>
</dbReference>
<dbReference type="PANTHER" id="PTHR40032">
    <property type="entry name" value="EXPORTED PROTEIN-RELATED"/>
    <property type="match status" value="1"/>
</dbReference>
<dbReference type="Pfam" id="PF12671">
    <property type="entry name" value="Amidase_6"/>
    <property type="match status" value="1"/>
</dbReference>
<sequence>MAGGVSLKYILEQLAEERLGFLVNGHAMRQESQVGDLKVMERKKKLLEKRKVDIIKAKAKAVINHVRVEDDGTTCLSYTIHYEYVCKEQDDSLYIEEHIEERMAFLYDHILISDQEIAKKPAGFHEGTSIIDYSEAEEEREAFGRAFQYDRLGAVQYAEKFWNKRNPAYKNFSDNCTNFISQCLHAGGAPMRGHPNRGSGWWMKQSSWSYSWTVAHSMKMYLSNSKAGLRAVRVKSAEELMPGDVICYDFEGDGRFNHTTIVVAKDKGNMPLVNAQTYDSRMRYWSYEDSTAYTPSIRYAFFHIVDDTTKE</sequence>
<feature type="chain" id="PRO_0000360567" description="Uncharacterized protein YhbB">
    <location>
        <begin position="1"/>
        <end position="311"/>
    </location>
</feature>
<feature type="sequence conflict" description="In Ref. 1; CAB07515." evidence="1" ref="1">
    <original>E</original>
    <variation>G</variation>
    <location>
        <position position="135"/>
    </location>
</feature>
<keyword id="KW-1185">Reference proteome</keyword>
<evidence type="ECO:0000305" key="1"/>